<sequence length="192" mass="22762">MENRWQVLIVWQVDRMKIRTWNSLVKHHMYVSRRASGWYYRHHYESRHPKISSEVHIPLGEARLVIITYWGLQTGERDWHLGHGVSIEWRLRRYSTRVDPGLADQLIHMHYFDCFADSAIRKAILGHRVSSRCDYQAGHNKVGSLQYLALTALIKPKKIKPPLPSVKKLVEDRWNKPQKTRDRRGNHTMNGH</sequence>
<evidence type="ECO:0000250" key="1">
    <source>
        <dbReference type="UniProtKB" id="O70897"/>
    </source>
</evidence>
<evidence type="ECO:0000255" key="2">
    <source>
        <dbReference type="HAMAP-Rule" id="MF_04081"/>
    </source>
</evidence>
<evidence type="ECO:0000256" key="3">
    <source>
        <dbReference type="SAM" id="MobiDB-lite"/>
    </source>
</evidence>
<keyword id="KW-0014">AIDS</keyword>
<keyword id="KW-1032">Host cell membrane</keyword>
<keyword id="KW-1035">Host cytoplasm</keyword>
<keyword id="KW-1043">Host membrane</keyword>
<keyword id="KW-0945">Host-virus interaction</keyword>
<keyword id="KW-0472">Membrane</keyword>
<keyword id="KW-0479">Metal-binding</keyword>
<keyword id="KW-0597">Phosphoprotein</keyword>
<keyword id="KW-1185">Reference proteome</keyword>
<keyword id="KW-0694">RNA-binding</keyword>
<keyword id="KW-0832">Ubl conjugation</keyword>
<keyword id="KW-0833">Ubl conjugation pathway</keyword>
<keyword id="KW-0946">Virion</keyword>
<keyword id="KW-0862">Zinc</keyword>
<proteinExistence type="inferred from homology"/>
<feature type="chain" id="PRO_0000245107" description="Virion infectivity factor" evidence="2">
    <location>
        <begin position="1"/>
        <end position="192"/>
    </location>
</feature>
<feature type="chain" id="PRO_0000245108" description="p17" evidence="2">
    <location>
        <begin position="1"/>
        <end position="150"/>
    </location>
</feature>
<feature type="chain" id="PRO_0000245109" description="p7" evidence="2">
    <location>
        <begin position="151"/>
        <end position="192"/>
    </location>
</feature>
<feature type="region of interest" description="Interaction with host APOBEC3F; F1-box" evidence="2">
    <location>
        <begin position="14"/>
        <end position="17"/>
    </location>
</feature>
<feature type="region of interest" description="Interaction with host APOBEC3G; G-box" evidence="2">
    <location>
        <begin position="40"/>
        <end position="44"/>
    </location>
</feature>
<feature type="region of interest" description="Interaction with host APOBEC3F and APOBEC3G; FG-box" evidence="2">
    <location>
        <begin position="54"/>
        <end position="72"/>
    </location>
</feature>
<feature type="region of interest" description="Interaction with host APOBEC3F; F2-box" evidence="2">
    <location>
        <begin position="74"/>
        <end position="79"/>
    </location>
</feature>
<feature type="region of interest" description="RNA-binding" evidence="2">
    <location>
        <begin position="75"/>
        <end position="114"/>
    </location>
</feature>
<feature type="region of interest" description="SOCS box-like" evidence="2">
    <location>
        <begin position="151"/>
        <end position="180"/>
    </location>
</feature>
<feature type="region of interest" description="Multimerization" evidence="2">
    <location>
        <begin position="151"/>
        <end position="164"/>
    </location>
</feature>
<feature type="region of interest" description="Disordered" evidence="3">
    <location>
        <begin position="170"/>
        <end position="192"/>
    </location>
</feature>
<feature type="region of interest" description="Membrane association" evidence="2">
    <location>
        <begin position="171"/>
        <end position="172"/>
    </location>
</feature>
<feature type="short sequence motif" description="HCCH motif" evidence="2">
    <location>
        <begin position="108"/>
        <end position="139"/>
    </location>
</feature>
<feature type="short sequence motif" description="BC-box-like motif" evidence="2">
    <location>
        <begin position="144"/>
        <end position="153"/>
    </location>
</feature>
<feature type="compositionally biased region" description="Basic and acidic residues" evidence="3">
    <location>
        <begin position="170"/>
        <end position="185"/>
    </location>
</feature>
<feature type="binding site" evidence="2">
    <location>
        <position position="108"/>
    </location>
    <ligand>
        <name>Zn(2+)</name>
        <dbReference type="ChEBI" id="CHEBI:29105"/>
    </ligand>
</feature>
<feature type="binding site" evidence="2">
    <location>
        <position position="114"/>
    </location>
    <ligand>
        <name>Zn(2+)</name>
        <dbReference type="ChEBI" id="CHEBI:29105"/>
    </ligand>
</feature>
<feature type="binding site" evidence="2">
    <location>
        <position position="133"/>
    </location>
    <ligand>
        <name>Zn(2+)</name>
        <dbReference type="ChEBI" id="CHEBI:29105"/>
    </ligand>
</feature>
<feature type="binding site" evidence="2">
    <location>
        <position position="139"/>
    </location>
    <ligand>
        <name>Zn(2+)</name>
        <dbReference type="ChEBI" id="CHEBI:29105"/>
    </ligand>
</feature>
<feature type="site" description="Cleavage in virion (by viral protease)" evidence="2">
    <location>
        <begin position="150"/>
        <end position="151"/>
    </location>
</feature>
<feature type="modified residue" description="Phosphothreonine; by host MAP4K1" evidence="2">
    <location>
        <position position="96"/>
    </location>
</feature>
<feature type="modified residue" description="Phosphoserine; by host" evidence="2">
    <location>
        <position position="144"/>
    </location>
</feature>
<feature type="modified residue" description="Phosphoserine; by host MAP4K1" evidence="2">
    <location>
        <position position="165"/>
    </location>
</feature>
<feature type="modified residue" description="Phosphothreonine; by host" evidence="2">
    <location>
        <position position="188"/>
    </location>
</feature>
<accession>O12159</accession>
<organismHost>
    <name type="scientific">Homo sapiens</name>
    <name type="common">Human</name>
    <dbReference type="NCBI Taxonomy" id="9606"/>
</organismHost>
<reference key="1">
    <citation type="journal article" date="1996" name="J. Virol.">
        <title>Molecular cloning and analysis of functional envelope genes from human immunodeficiency virus type 1 sequence subtypes A through G. The WHO and NIAID Networks for HIV Isolation and Characterization.</title>
        <authorList>
            <person name="Gao F."/>
            <person name="Morrison S.G."/>
            <person name="Robertson D.L."/>
            <person name="Thornton C.L."/>
            <person name="Craig S."/>
            <person name="Karlsson G."/>
            <person name="Sodroski J."/>
            <person name="Morgado M."/>
            <person name="Galvao-Castro B."/>
            <person name="von Briesen H."/>
            <person name="Beddows S."/>
            <person name="Weber J."/>
            <person name="Sharp P.M."/>
            <person name="Shaw G.M."/>
            <person name="Hahn B.H."/>
        </authorList>
    </citation>
    <scope>NUCLEOTIDE SEQUENCE [GENOMIC DNA]</scope>
</reference>
<dbReference type="EMBL" id="U52953">
    <property type="protein sequence ID" value="AAB61127.1"/>
    <property type="molecule type" value="Genomic_DNA"/>
</dbReference>
<dbReference type="SMR" id="O12159"/>
<dbReference type="Proteomes" id="UP000007686">
    <property type="component" value="Segment"/>
</dbReference>
<dbReference type="GO" id="GO:0030430">
    <property type="term" value="C:host cell cytoplasm"/>
    <property type="evidence" value="ECO:0007669"/>
    <property type="project" value="UniProtKB-SubCell"/>
</dbReference>
<dbReference type="GO" id="GO:0020002">
    <property type="term" value="C:host cell plasma membrane"/>
    <property type="evidence" value="ECO:0007669"/>
    <property type="project" value="UniProtKB-SubCell"/>
</dbReference>
<dbReference type="GO" id="GO:0016020">
    <property type="term" value="C:membrane"/>
    <property type="evidence" value="ECO:0007669"/>
    <property type="project" value="UniProtKB-UniRule"/>
</dbReference>
<dbReference type="GO" id="GO:0044423">
    <property type="term" value="C:virion component"/>
    <property type="evidence" value="ECO:0007669"/>
    <property type="project" value="UniProtKB-UniRule"/>
</dbReference>
<dbReference type="GO" id="GO:0046872">
    <property type="term" value="F:metal ion binding"/>
    <property type="evidence" value="ECO:0007669"/>
    <property type="project" value="UniProtKB-KW"/>
</dbReference>
<dbReference type="GO" id="GO:0003723">
    <property type="term" value="F:RNA binding"/>
    <property type="evidence" value="ECO:0007669"/>
    <property type="project" value="UniProtKB-UniRule"/>
</dbReference>
<dbReference type="GO" id="GO:0019058">
    <property type="term" value="P:viral life cycle"/>
    <property type="evidence" value="ECO:0007669"/>
    <property type="project" value="InterPro"/>
</dbReference>
<dbReference type="HAMAP" id="MF_04081">
    <property type="entry name" value="HIV_VIF"/>
    <property type="match status" value="1"/>
</dbReference>
<dbReference type="InterPro" id="IPR000475">
    <property type="entry name" value="Vif"/>
</dbReference>
<dbReference type="Pfam" id="PF00559">
    <property type="entry name" value="Vif"/>
    <property type="match status" value="1"/>
</dbReference>
<dbReference type="PRINTS" id="PR00349">
    <property type="entry name" value="VIRIONINFFCT"/>
</dbReference>
<organism>
    <name type="scientific">Human immunodeficiency virus type 1 group M subtype C (isolate 92BR025)</name>
    <name type="common">HIV-1</name>
    <dbReference type="NCBI Taxonomy" id="388812"/>
    <lineage>
        <taxon>Viruses</taxon>
        <taxon>Riboviria</taxon>
        <taxon>Pararnavirae</taxon>
        <taxon>Artverviricota</taxon>
        <taxon>Revtraviricetes</taxon>
        <taxon>Ortervirales</taxon>
        <taxon>Retroviridae</taxon>
        <taxon>Orthoretrovirinae</taxon>
        <taxon>Lentivirus</taxon>
        <taxon>Human immunodeficiency virus type 1</taxon>
    </lineage>
</organism>
<gene>
    <name evidence="2" type="primary">vif</name>
</gene>
<comment type="function">
    <text evidence="2">Counteracts the innate antiviral activity of host APOBEC3F and APOBEC3G by promoting their ubiquitination and degradation. Acts as a substrate recognition component of an E3 ubiquitin-protein ligase complex: mechanistically, Vif hijacks a host cullin-5-RING E3 ubiquitin-protein ligase complex (ECS complex) and the transcription coactivator CBFB/CBF-beta to form an active E3 ubiquitin-protein ligase complex that targets APOBEC3G and APOBEC3F for polyubiquitination, leading to their degradation by the proteasome. Vif interaction with APOBEC3G also blocks its cytidine deaminase activity in a proteasome-independent manner, suggesting a dual inhibitory mechanism. May interact directly with APOBEC3G mRNA in order to inhibit its translation. Association with CBFB/CBF-beta also inhibits the transcription coactivator activity of CBFB/CBF-beta. Seems to play a role in viral morphology by affecting the stability of the viral nucleoprotein core. Finally, Vif also contributes to the G2 cell cycle arrest observed in HIV infected cells.</text>
</comment>
<comment type="subunit">
    <text evidence="1">Homomultimer; in vitro and presumably in vivo. Interacts with viral RNA and Pr55Gag precursor; these interactions mediate Vif incorporation into the virion. Interacts with the viral reverse transcriptase. Forms cullin-5-RING E3 ubiquitin-protein ligase complex (ECS complex) by interacting with host CUL5, RBX2, elongin BC complex (ELOB and ELOC) and CBFB/CBF-beta. Within the ECS complex, Vif interacts directly with host CUL5, ELOC and APOBEC (APOBEC3F and APOBEC3G) substrates. The ECS complex also contains some single-stranded RNA (ssRNA) that acts as a glue that bridges Vif with APOBEC (APOBEC3F and APOBEC3G) substrates. Interacts with host UBCE7IP1 isoform 3/ZIN and possibly with SAT. Interacts with host tyrosine kinases HCK and FYN; these interactions may decrease level of phosphorylated APOBEC3G incorporation into virions. Interacts with host ABCE1; this interaction may play a role in protecting viral RNA from damage during viral assembly. Interacts with host MDM2; this interaction targets Vif for degradation by the proteasome.</text>
</comment>
<comment type="subcellular location">
    <subcellularLocation>
        <location evidence="2">Host cytoplasm</location>
    </subcellularLocation>
    <subcellularLocation>
        <location evidence="2">Host cell membrane</location>
        <topology evidence="2">Peripheral membrane protein</topology>
        <orientation evidence="2">Cytoplasmic side</orientation>
    </subcellularLocation>
    <subcellularLocation>
        <location evidence="2">Virion</location>
    </subcellularLocation>
    <text evidence="2">In the cytoplasm, seems to colocalize with intermediate filament vimentin. A fraction is associated with the cytoplasmic side of cellular membranes, presumably via the interaction with Pr55Gag precursor. Incorporated in virions at a ratio of approximately 7 to 20 molecules per virion.</text>
</comment>
<comment type="induction">
    <text evidence="2">Expressed late during infection in a Rev-dependent manner.</text>
</comment>
<comment type="domain">
    <text evidence="2">The BC-like-box motif mediates the interaction with elongin BC complex.</text>
</comment>
<comment type="domain">
    <text evidence="2">The HCCH motif (H-x(5)-C-x(18)-C-x(5)-H) mediates the interaction with CUL5.</text>
</comment>
<comment type="PTM">
    <text evidence="2">Processed in virion by the viral protease.</text>
</comment>
<comment type="PTM">
    <text evidence="2">Highly phosphorylated on serine and threonine residues.</text>
</comment>
<comment type="PTM">
    <text evidence="2">Polyubiquitinated and degraded by the proteasome in the presence of APOBEC3G.</text>
</comment>
<comment type="miscellaneous">
    <text evidence="2">Vif-defective viruses show catastrophic failure in reverse transcription due to APOBEC-induced mutations that initiate a DNA base repair pathway and compromise the structural integrity of the ssDNA. In the absence of Vif, the virion is morphologically abnormal.</text>
</comment>
<comment type="miscellaneous">
    <text evidence="2">HIV-1 lineages are divided in three main groups, M (for Major), O (for Outlier), and N (for New, or Non-M, Non-O). The vast majority of strains found worldwide belong to the group M. Group O seems to be endemic to and largely confined to Cameroon and neighboring countries in West Central Africa, where these viruses represent a small minority of HIV-1 strains. The group N is represented by a limited number of isolates from Cameroonian persons. The group M is further subdivided in 9 clades or subtypes (A to D, F to H, J and K).</text>
</comment>
<comment type="miscellaneous">
    <text evidence="2">Required for replication in 'nonpermissive' cells, including primary T-cells, macrophages and certain T-cell lines, but is dispensable for replication in 'permissive' cell lines, such as 293T cells. In nonpermissive cells, Vif-defective viruses can produce virions, but they fail to complete reverse transcription and cannot successfully infect new cells.</text>
</comment>
<comment type="similarity">
    <text evidence="2">Belongs to the primate lentivirus group Vif protein family.</text>
</comment>
<name>VIF_HV192</name>
<protein>
    <recommendedName>
        <fullName evidence="2">Virion infectivity factor</fullName>
        <shortName evidence="2">Vif</shortName>
    </recommendedName>
    <alternativeName>
        <fullName evidence="2">SOR protein</fullName>
    </alternativeName>
    <component>
        <recommendedName>
            <fullName evidence="2">p17</fullName>
        </recommendedName>
    </component>
    <component>
        <recommendedName>
            <fullName evidence="2">p7</fullName>
        </recommendedName>
    </component>
</protein>